<sequence length="630" mass="69296">MMGIQILPPQLANQIAAGEVVERPASVVKELVENSLDAGASRVDIEIDKGGSKLIKIRDNGSGIPKDELALALSRHATSKLHTLDDLEAILSFGFRGEALASISSVSRLTLTSRTADQTEAWQAHAEGADMAVKVMPAAHPVGSTIEVVDLFFNTPARRRFLKSDKTEFTHIDEWLKRIALVRGDIHFTLTHNGKTVRNYRPAMNEAQYLQRLTQVSGRPFAEQALKIECQHDDLRLSGYLQSPWSPVITDTHYFYVNGRLIRDRLVNHAVRQAFAQKAELEQPGYVLMLDIDPHQVDVNVHPAKHEVRFHQSRYVHDYILQALQSALEEAGELNVVHSSSLDEVEDVFVDSPTSAVGIAAPFALGADTLESAQPLVASAAVQVKSAGAGREGASFGTQTNAFGSMATSRDSSRGSYSASESRQRTELPSKAAIASYGALLQTPAYSVKNHDYQPSLPMPAILDSQYWVMATADKLSLLPIKSVALATRCQEIEAKLATGLIGQPLLMPVSVAADADWQAVLDEHDTLIRQLGLELTIRYQQLIIKKVPPYIRESQLAKVIPEWLQSLRFETPAPSALAFWLAKHSLTGFVSAPEIWAAFSQLAEEKKQLIANKAILLPWQSWLEEQASE</sequence>
<evidence type="ECO:0000255" key="1">
    <source>
        <dbReference type="HAMAP-Rule" id="MF_00149"/>
    </source>
</evidence>
<evidence type="ECO:0000256" key="2">
    <source>
        <dbReference type="SAM" id="MobiDB-lite"/>
    </source>
</evidence>
<comment type="function">
    <text evidence="1">This protein is involved in the repair of mismatches in DNA. It is required for dam-dependent methyl-directed DNA mismatch repair. May act as a 'molecular matchmaker', a protein that promotes the formation of a stable complex between two or more DNA-binding proteins in an ATP-dependent manner without itself being part of a final effector complex.</text>
</comment>
<comment type="similarity">
    <text evidence="1">Belongs to the DNA mismatch repair MutL/HexB family.</text>
</comment>
<proteinExistence type="inferred from homology"/>
<organism>
    <name type="scientific">Shewanella baltica (strain OS185)</name>
    <dbReference type="NCBI Taxonomy" id="402882"/>
    <lineage>
        <taxon>Bacteria</taxon>
        <taxon>Pseudomonadati</taxon>
        <taxon>Pseudomonadota</taxon>
        <taxon>Gammaproteobacteria</taxon>
        <taxon>Alteromonadales</taxon>
        <taxon>Shewanellaceae</taxon>
        <taxon>Shewanella</taxon>
    </lineage>
</organism>
<reference key="1">
    <citation type="submission" date="2007-07" db="EMBL/GenBank/DDBJ databases">
        <title>Complete sequence of chromosome of Shewanella baltica OS185.</title>
        <authorList>
            <consortium name="US DOE Joint Genome Institute"/>
            <person name="Copeland A."/>
            <person name="Lucas S."/>
            <person name="Lapidus A."/>
            <person name="Barry K."/>
            <person name="Glavina del Rio T."/>
            <person name="Dalin E."/>
            <person name="Tice H."/>
            <person name="Pitluck S."/>
            <person name="Sims D."/>
            <person name="Brettin T."/>
            <person name="Bruce D."/>
            <person name="Detter J.C."/>
            <person name="Han C."/>
            <person name="Schmutz J."/>
            <person name="Larimer F."/>
            <person name="Land M."/>
            <person name="Hauser L."/>
            <person name="Kyrpides N."/>
            <person name="Mikhailova N."/>
            <person name="Brettar I."/>
            <person name="Rodrigues J."/>
            <person name="Konstantinidis K."/>
            <person name="Tiedje J."/>
            <person name="Richardson P."/>
        </authorList>
    </citation>
    <scope>NUCLEOTIDE SEQUENCE [LARGE SCALE GENOMIC DNA]</scope>
    <source>
        <strain>OS185</strain>
    </source>
</reference>
<keyword id="KW-0227">DNA damage</keyword>
<keyword id="KW-0234">DNA repair</keyword>
<feature type="chain" id="PRO_1000010075" description="DNA mismatch repair protein MutL">
    <location>
        <begin position="1"/>
        <end position="630"/>
    </location>
</feature>
<feature type="region of interest" description="Disordered" evidence="2">
    <location>
        <begin position="398"/>
        <end position="425"/>
    </location>
</feature>
<feature type="compositionally biased region" description="Polar residues" evidence="2">
    <location>
        <begin position="398"/>
        <end position="408"/>
    </location>
</feature>
<gene>
    <name evidence="1" type="primary">mutL</name>
    <name type="ordered locus">Shew185_3769</name>
</gene>
<accession>A6WSV4</accession>
<name>MUTL_SHEB8</name>
<protein>
    <recommendedName>
        <fullName evidence="1">DNA mismatch repair protein MutL</fullName>
    </recommendedName>
</protein>
<dbReference type="EMBL" id="CP000753">
    <property type="protein sequence ID" value="ABS09893.1"/>
    <property type="molecule type" value="Genomic_DNA"/>
</dbReference>
<dbReference type="SMR" id="A6WSV4"/>
<dbReference type="KEGG" id="sbm:Shew185_3769"/>
<dbReference type="HOGENOM" id="CLU_004131_4_2_6"/>
<dbReference type="GO" id="GO:0032300">
    <property type="term" value="C:mismatch repair complex"/>
    <property type="evidence" value="ECO:0007669"/>
    <property type="project" value="InterPro"/>
</dbReference>
<dbReference type="GO" id="GO:0005524">
    <property type="term" value="F:ATP binding"/>
    <property type="evidence" value="ECO:0007669"/>
    <property type="project" value="InterPro"/>
</dbReference>
<dbReference type="GO" id="GO:0016887">
    <property type="term" value="F:ATP hydrolysis activity"/>
    <property type="evidence" value="ECO:0007669"/>
    <property type="project" value="InterPro"/>
</dbReference>
<dbReference type="GO" id="GO:0140664">
    <property type="term" value="F:ATP-dependent DNA damage sensor activity"/>
    <property type="evidence" value="ECO:0007669"/>
    <property type="project" value="InterPro"/>
</dbReference>
<dbReference type="GO" id="GO:0030983">
    <property type="term" value="F:mismatched DNA binding"/>
    <property type="evidence" value="ECO:0007669"/>
    <property type="project" value="InterPro"/>
</dbReference>
<dbReference type="GO" id="GO:0006298">
    <property type="term" value="P:mismatch repair"/>
    <property type="evidence" value="ECO:0007669"/>
    <property type="project" value="UniProtKB-UniRule"/>
</dbReference>
<dbReference type="CDD" id="cd16926">
    <property type="entry name" value="HATPase_MutL-MLH-PMS-like"/>
    <property type="match status" value="1"/>
</dbReference>
<dbReference type="CDD" id="cd03482">
    <property type="entry name" value="MutL_Trans_MutL"/>
    <property type="match status" value="1"/>
</dbReference>
<dbReference type="FunFam" id="3.30.230.10:FF:000013">
    <property type="entry name" value="DNA mismatch repair endonuclease MutL"/>
    <property type="match status" value="1"/>
</dbReference>
<dbReference type="FunFam" id="3.30.565.10:FF:000003">
    <property type="entry name" value="DNA mismatch repair endonuclease MutL"/>
    <property type="match status" value="1"/>
</dbReference>
<dbReference type="Gene3D" id="3.30.230.10">
    <property type="match status" value="1"/>
</dbReference>
<dbReference type="Gene3D" id="3.30.565.10">
    <property type="entry name" value="Histidine kinase-like ATPase, C-terminal domain"/>
    <property type="match status" value="1"/>
</dbReference>
<dbReference type="Gene3D" id="3.30.1370.100">
    <property type="entry name" value="MutL, C-terminal domain, regulatory subdomain"/>
    <property type="match status" value="1"/>
</dbReference>
<dbReference type="HAMAP" id="MF_00149">
    <property type="entry name" value="DNA_mis_repair"/>
    <property type="match status" value="1"/>
</dbReference>
<dbReference type="InterPro" id="IPR014762">
    <property type="entry name" value="DNA_mismatch_repair_CS"/>
</dbReference>
<dbReference type="InterPro" id="IPR020667">
    <property type="entry name" value="DNA_mismatch_repair_MutL"/>
</dbReference>
<dbReference type="InterPro" id="IPR013507">
    <property type="entry name" value="DNA_mismatch_S5_2-like"/>
</dbReference>
<dbReference type="InterPro" id="IPR036890">
    <property type="entry name" value="HATPase_C_sf"/>
</dbReference>
<dbReference type="InterPro" id="IPR002099">
    <property type="entry name" value="MutL/Mlh/PMS"/>
</dbReference>
<dbReference type="InterPro" id="IPR038973">
    <property type="entry name" value="MutL/Mlh/Pms-like"/>
</dbReference>
<dbReference type="InterPro" id="IPR014790">
    <property type="entry name" value="MutL_C"/>
</dbReference>
<dbReference type="InterPro" id="IPR042121">
    <property type="entry name" value="MutL_C_regsub"/>
</dbReference>
<dbReference type="InterPro" id="IPR037198">
    <property type="entry name" value="MutL_C_sf"/>
</dbReference>
<dbReference type="InterPro" id="IPR020568">
    <property type="entry name" value="Ribosomal_Su5_D2-typ_SF"/>
</dbReference>
<dbReference type="InterPro" id="IPR014721">
    <property type="entry name" value="Ribsml_uS5_D2-typ_fold_subgr"/>
</dbReference>
<dbReference type="NCBIfam" id="TIGR00585">
    <property type="entry name" value="mutl"/>
    <property type="match status" value="1"/>
</dbReference>
<dbReference type="NCBIfam" id="NF000948">
    <property type="entry name" value="PRK00095.1-1"/>
    <property type="match status" value="1"/>
</dbReference>
<dbReference type="PANTHER" id="PTHR10073">
    <property type="entry name" value="DNA MISMATCH REPAIR PROTEIN MLH, PMS, MUTL"/>
    <property type="match status" value="1"/>
</dbReference>
<dbReference type="PANTHER" id="PTHR10073:SF12">
    <property type="entry name" value="DNA MISMATCH REPAIR PROTEIN MLH1"/>
    <property type="match status" value="1"/>
</dbReference>
<dbReference type="Pfam" id="PF01119">
    <property type="entry name" value="DNA_mis_repair"/>
    <property type="match status" value="1"/>
</dbReference>
<dbReference type="Pfam" id="PF13589">
    <property type="entry name" value="HATPase_c_3"/>
    <property type="match status" value="1"/>
</dbReference>
<dbReference type="Pfam" id="PF08676">
    <property type="entry name" value="MutL_C"/>
    <property type="match status" value="1"/>
</dbReference>
<dbReference type="SMART" id="SM01340">
    <property type="entry name" value="DNA_mis_repair"/>
    <property type="match status" value="1"/>
</dbReference>
<dbReference type="SMART" id="SM00853">
    <property type="entry name" value="MutL_C"/>
    <property type="match status" value="1"/>
</dbReference>
<dbReference type="SUPFAM" id="SSF55874">
    <property type="entry name" value="ATPase domain of HSP90 chaperone/DNA topoisomerase II/histidine kinase"/>
    <property type="match status" value="1"/>
</dbReference>
<dbReference type="SUPFAM" id="SSF118116">
    <property type="entry name" value="DNA mismatch repair protein MutL"/>
    <property type="match status" value="1"/>
</dbReference>
<dbReference type="SUPFAM" id="SSF54211">
    <property type="entry name" value="Ribosomal protein S5 domain 2-like"/>
    <property type="match status" value="1"/>
</dbReference>
<dbReference type="PROSITE" id="PS00058">
    <property type="entry name" value="DNA_MISMATCH_REPAIR_1"/>
    <property type="match status" value="1"/>
</dbReference>